<feature type="chain" id="PRO_0000361936" description="Kynurenine 3-monooxygenase">
    <location>
        <begin position="1"/>
        <end position="446"/>
    </location>
</feature>
<protein>
    <recommendedName>
        <fullName evidence="1">Kynurenine 3-monooxygenase</fullName>
        <ecNumber evidence="1">1.14.13.9</ecNumber>
    </recommendedName>
    <alternativeName>
        <fullName evidence="1">Kynurenine 3-hydroxylase</fullName>
    </alternativeName>
</protein>
<dbReference type="EC" id="1.14.13.9" evidence="1"/>
<dbReference type="EMBL" id="CP000685">
    <property type="protein sequence ID" value="ABQ03530.1"/>
    <property type="molecule type" value="Genomic_DNA"/>
</dbReference>
<dbReference type="RefSeq" id="WP_012022586.1">
    <property type="nucleotide sequence ID" value="NZ_MUGZ01000026.1"/>
</dbReference>
<dbReference type="SMR" id="A5FMP6"/>
<dbReference type="STRING" id="376686.Fjoh_0495"/>
<dbReference type="KEGG" id="fjo:Fjoh_0495"/>
<dbReference type="eggNOG" id="COG0654">
    <property type="taxonomic scope" value="Bacteria"/>
</dbReference>
<dbReference type="HOGENOM" id="CLU_023210_0_1_10"/>
<dbReference type="OrthoDB" id="9766816at2"/>
<dbReference type="UniPathway" id="UPA00253">
    <property type="reaction ID" value="UER00328"/>
</dbReference>
<dbReference type="Proteomes" id="UP000006694">
    <property type="component" value="Chromosome"/>
</dbReference>
<dbReference type="GO" id="GO:0071949">
    <property type="term" value="F:FAD binding"/>
    <property type="evidence" value="ECO:0007669"/>
    <property type="project" value="InterPro"/>
</dbReference>
<dbReference type="GO" id="GO:0004502">
    <property type="term" value="F:kynurenine 3-monooxygenase activity"/>
    <property type="evidence" value="ECO:0007669"/>
    <property type="project" value="UniProtKB-UniRule"/>
</dbReference>
<dbReference type="GO" id="GO:0043420">
    <property type="term" value="P:anthranilate metabolic process"/>
    <property type="evidence" value="ECO:0007669"/>
    <property type="project" value="UniProtKB-UniRule"/>
</dbReference>
<dbReference type="GO" id="GO:0070189">
    <property type="term" value="P:kynurenine metabolic process"/>
    <property type="evidence" value="ECO:0007669"/>
    <property type="project" value="TreeGrafter"/>
</dbReference>
<dbReference type="GO" id="GO:0006569">
    <property type="term" value="P:L-tryptophan catabolic process"/>
    <property type="evidence" value="ECO:0007669"/>
    <property type="project" value="UniProtKB-UniRule"/>
</dbReference>
<dbReference type="GO" id="GO:0009435">
    <property type="term" value="P:NAD biosynthetic process"/>
    <property type="evidence" value="ECO:0007669"/>
    <property type="project" value="UniProtKB-UniPathway"/>
</dbReference>
<dbReference type="GO" id="GO:0019805">
    <property type="term" value="P:quinolinate biosynthetic process"/>
    <property type="evidence" value="ECO:0007669"/>
    <property type="project" value="UniProtKB-UniRule"/>
</dbReference>
<dbReference type="FunFam" id="3.50.50.60:FF:000185">
    <property type="entry name" value="Kynurenine 3-monooxygenase"/>
    <property type="match status" value="1"/>
</dbReference>
<dbReference type="Gene3D" id="3.50.50.60">
    <property type="entry name" value="FAD/NAD(P)-binding domain"/>
    <property type="match status" value="1"/>
</dbReference>
<dbReference type="HAMAP" id="MF_01971">
    <property type="entry name" value="Kynurenine_monooxygenase"/>
    <property type="match status" value="1"/>
</dbReference>
<dbReference type="InterPro" id="IPR002938">
    <property type="entry name" value="FAD-bd"/>
</dbReference>
<dbReference type="InterPro" id="IPR036188">
    <property type="entry name" value="FAD/NAD-bd_sf"/>
</dbReference>
<dbReference type="InterPro" id="IPR027545">
    <property type="entry name" value="Kynurenine_monooxygenase"/>
</dbReference>
<dbReference type="PANTHER" id="PTHR46028">
    <property type="entry name" value="KYNURENINE 3-MONOOXYGENASE"/>
    <property type="match status" value="1"/>
</dbReference>
<dbReference type="PANTHER" id="PTHR46028:SF2">
    <property type="entry name" value="KYNURENINE 3-MONOOXYGENASE"/>
    <property type="match status" value="1"/>
</dbReference>
<dbReference type="Pfam" id="PF01494">
    <property type="entry name" value="FAD_binding_3"/>
    <property type="match status" value="1"/>
</dbReference>
<dbReference type="PRINTS" id="PR00420">
    <property type="entry name" value="RNGMNOXGNASE"/>
</dbReference>
<dbReference type="SUPFAM" id="SSF51905">
    <property type="entry name" value="FAD/NAD(P)-binding domain"/>
    <property type="match status" value="1"/>
</dbReference>
<keyword id="KW-0274">FAD</keyword>
<keyword id="KW-0285">Flavoprotein</keyword>
<keyword id="KW-0503">Monooxygenase</keyword>
<keyword id="KW-0521">NADP</keyword>
<keyword id="KW-0560">Oxidoreductase</keyword>
<keyword id="KW-0662">Pyridine nucleotide biosynthesis</keyword>
<comment type="function">
    <text evidence="1">Catalyzes the hydroxylation of L-kynurenine (L-Kyn) to form 3-hydroxy-L-kynurenine (L-3OHKyn). Required for synthesis of quinolinic acid.</text>
</comment>
<comment type="catalytic activity">
    <reaction evidence="1">
        <text>L-kynurenine + NADPH + O2 + H(+) = 3-hydroxy-L-kynurenine + NADP(+) + H2O</text>
        <dbReference type="Rhea" id="RHEA:20545"/>
        <dbReference type="ChEBI" id="CHEBI:15377"/>
        <dbReference type="ChEBI" id="CHEBI:15378"/>
        <dbReference type="ChEBI" id="CHEBI:15379"/>
        <dbReference type="ChEBI" id="CHEBI:57783"/>
        <dbReference type="ChEBI" id="CHEBI:57959"/>
        <dbReference type="ChEBI" id="CHEBI:58125"/>
        <dbReference type="ChEBI" id="CHEBI:58349"/>
        <dbReference type="EC" id="1.14.13.9"/>
    </reaction>
</comment>
<comment type="cofactor">
    <cofactor evidence="1">
        <name>FAD</name>
        <dbReference type="ChEBI" id="CHEBI:57692"/>
    </cofactor>
</comment>
<comment type="pathway">
    <text evidence="1">Cofactor biosynthesis; NAD(+) biosynthesis; quinolinate from L-kynurenine: step 1/3.</text>
</comment>
<comment type="similarity">
    <text evidence="1">Belongs to the aromatic-ring hydroxylase family. KMO subfamily.</text>
</comment>
<sequence>MQTSLKIAVVGSGLVGSLLAIYLKKAGHTVHVYDRSPDIRKINFSGRSINLAMSNRGWKALDGVGVGDAVREIAIPMDKRAIHLVDKLNFQNYGQEGESIYSISRGTLNRKMIDLAENAGAEFYFEQKIWDVTLSDATLHIGESERGEWEERKYDMVFGADGAFSRIRHRMQRQSMFNYSQEFLNMGYKELNIPANADRTHKLDKNSFHIWPRGEYMLIALPNLDGSFTCTLFMPFEGENSFESLTDRKMVEDFFEKNFPDSIEVIPELANDFFKNPTSTLVTMKCFPWTYEDKIALIGDACHAIVPFYGQGMNAGFEDITVLNEMIEKFGDDWKKIFTEYQISRKPNADAIAELSYRNFMEMSTKTADEKFLLQKKIEKVFSDKHPDKWIPLYSRVTFSDRPYAEALAIGDFQNGIMEEVLKLDNIENIWNTPEVENKILELLQK</sequence>
<accession>A5FMP6</accession>
<organism>
    <name type="scientific">Flavobacterium johnsoniae (strain ATCC 17061 / DSM 2064 / JCM 8514 / BCRC 14874 / CCUG 350202 / NBRC 14942 / NCIMB 11054 / UW101)</name>
    <name type="common">Cytophaga johnsonae</name>
    <dbReference type="NCBI Taxonomy" id="376686"/>
    <lineage>
        <taxon>Bacteria</taxon>
        <taxon>Pseudomonadati</taxon>
        <taxon>Bacteroidota</taxon>
        <taxon>Flavobacteriia</taxon>
        <taxon>Flavobacteriales</taxon>
        <taxon>Flavobacteriaceae</taxon>
        <taxon>Flavobacterium</taxon>
    </lineage>
</organism>
<proteinExistence type="inferred from homology"/>
<evidence type="ECO:0000255" key="1">
    <source>
        <dbReference type="HAMAP-Rule" id="MF_01971"/>
    </source>
</evidence>
<reference key="1">
    <citation type="journal article" date="2009" name="Appl. Environ. Microbiol.">
        <title>Novel features of the polysaccharide-digesting gliding bacterium Flavobacterium johnsoniae as revealed by genome sequence analysis.</title>
        <authorList>
            <person name="McBride M.J."/>
            <person name="Xie G."/>
            <person name="Martens E.C."/>
            <person name="Lapidus A."/>
            <person name="Henrissat B."/>
            <person name="Rhodes R.G."/>
            <person name="Goltsman E."/>
            <person name="Wang W."/>
            <person name="Xu J."/>
            <person name="Hunnicutt D.W."/>
            <person name="Staroscik A.M."/>
            <person name="Hoover T.R."/>
            <person name="Cheng Y.Q."/>
            <person name="Stein J.L."/>
        </authorList>
    </citation>
    <scope>NUCLEOTIDE SEQUENCE [LARGE SCALE GENOMIC DNA]</scope>
    <source>
        <strain>ATCC 17061 / DSM 2064 / JCM 8514 / BCRC 14874 / CCUG 350202 / NBRC 14942 / NCIMB 11054 / UW101</strain>
    </source>
</reference>
<name>KMO_FLAJ1</name>
<gene>
    <name evidence="1" type="primary">kmo</name>
    <name type="ordered locus">Fjoh_0495</name>
</gene>